<sequence length="452" mass="51106">MARRRRRACIALFLVLLFAFGTLMGLRTLKAPDGLPALGPGPELAPFERRPEGNPAPARAPAAPAAPPPPPPRTAAPRASLGPAEADPAPRQSLRVYSDLHAFYYSWYGSPRREGHYIHWDHVMVPHWDPKISASYPRGRHSPPDDLGSSFYPELGPYSSRDPDVLREHMTQLKEAAIGVLVLSWYPPGMADDNGEPTDDLVPAILDTAHQYNIQVAFHIQPYKGRDDITVHDNIKYIIDTYGSHGAFYRYKNSMGKSLPLFYIYDSYLTSPEAWAHLLTQNGPHSIRNTPYDGVFIALLVEESHTHDILAAGFDGMYTYFASNGFSFGSSHQNWKAVKNFCDTNNLMFIPSVGPGYIDTSIRPWNNHNTRNRVNGKYYETALQAALTVRPEIVSITSFNEWHEGTQIEKAVPKTTPTRLYLDYLPHQSSLYLELTRRWAEHFIKEKEQWLM</sequence>
<feature type="chain" id="PRO_0000282321" description="Glycoprotein endo-alpha-1,2-mannosidase-like protein">
    <location>
        <begin position="1"/>
        <end position="452"/>
    </location>
</feature>
<feature type="topological domain" description="Cytoplasmic" evidence="2">
    <location>
        <begin position="1"/>
        <end position="8"/>
    </location>
</feature>
<feature type="transmembrane region" description="Helical; Signal-anchor for type II membrane protein" evidence="2">
    <location>
        <begin position="9"/>
        <end position="29"/>
    </location>
</feature>
<feature type="topological domain" description="Lumenal" evidence="2">
    <location>
        <begin position="30"/>
        <end position="452"/>
    </location>
</feature>
<feature type="region of interest" description="Disordered" evidence="3">
    <location>
        <begin position="40"/>
        <end position="90"/>
    </location>
</feature>
<feature type="compositionally biased region" description="Pro residues" evidence="3">
    <location>
        <begin position="64"/>
        <end position="74"/>
    </location>
</feature>
<keyword id="KW-0333">Golgi apparatus</keyword>
<keyword id="KW-0378">Hydrolase</keyword>
<keyword id="KW-0472">Membrane</keyword>
<keyword id="KW-1185">Reference proteome</keyword>
<keyword id="KW-0735">Signal-anchor</keyword>
<keyword id="KW-0812">Transmembrane</keyword>
<keyword id="KW-1133">Transmembrane helix</keyword>
<organism>
    <name type="scientific">Mus musculus</name>
    <name type="common">Mouse</name>
    <dbReference type="NCBI Taxonomy" id="10090"/>
    <lineage>
        <taxon>Eukaryota</taxon>
        <taxon>Metazoa</taxon>
        <taxon>Chordata</taxon>
        <taxon>Craniata</taxon>
        <taxon>Vertebrata</taxon>
        <taxon>Euteleostomi</taxon>
        <taxon>Mammalia</taxon>
        <taxon>Eutheria</taxon>
        <taxon>Euarchontoglires</taxon>
        <taxon>Glires</taxon>
        <taxon>Rodentia</taxon>
        <taxon>Myomorpha</taxon>
        <taxon>Muroidea</taxon>
        <taxon>Muridae</taxon>
        <taxon>Murinae</taxon>
        <taxon>Mus</taxon>
        <taxon>Mus</taxon>
    </lineage>
</organism>
<name>MANEL_MOUSE</name>
<evidence type="ECO:0000250" key="1"/>
<evidence type="ECO:0000255" key="2"/>
<evidence type="ECO:0000256" key="3">
    <source>
        <dbReference type="SAM" id="MobiDB-lite"/>
    </source>
</evidence>
<evidence type="ECO:0000305" key="4"/>
<dbReference type="EC" id="3.2.1.-"/>
<dbReference type="EMBL" id="AL606933">
    <property type="status" value="NOT_ANNOTATED_CDS"/>
    <property type="molecule type" value="Genomic_DNA"/>
</dbReference>
<dbReference type="EMBL" id="BC065047">
    <property type="protein sequence ID" value="AAH65047.1"/>
    <property type="molecule type" value="mRNA"/>
</dbReference>
<dbReference type="EMBL" id="AK137071">
    <property type="protein sequence ID" value="BAE23227.1"/>
    <property type="molecule type" value="mRNA"/>
</dbReference>
<dbReference type="CCDS" id="CCDS18629.1"/>
<dbReference type="RefSeq" id="NP_001007574.1">
    <property type="nucleotide sequence ID" value="NM_001007573.4"/>
</dbReference>
<dbReference type="SMR" id="Q6P1J0"/>
<dbReference type="FunCoup" id="Q6P1J0">
    <property type="interactions" value="424"/>
</dbReference>
<dbReference type="STRING" id="10090.ENSMUSP00000066000"/>
<dbReference type="CAZy" id="GH99">
    <property type="family name" value="Glycoside Hydrolase Family 99"/>
</dbReference>
<dbReference type="PhosphoSitePlus" id="Q6P1J0"/>
<dbReference type="PaxDb" id="10090-ENSMUSP00000066000"/>
<dbReference type="ProteomicsDB" id="287308"/>
<dbReference type="Antibodypedia" id="54337">
    <property type="antibodies" value="20 antibodies from 10 providers"/>
</dbReference>
<dbReference type="Ensembl" id="ENSMUST00000064444.8">
    <property type="protein sequence ID" value="ENSMUSP00000066000.8"/>
    <property type="gene ID" value="ENSMUSG00000042763.10"/>
</dbReference>
<dbReference type="GeneID" id="215090"/>
<dbReference type="KEGG" id="mmu:215090"/>
<dbReference type="UCSC" id="uc008urg.1">
    <property type="organism name" value="mouse"/>
</dbReference>
<dbReference type="AGR" id="MGI:2684896"/>
<dbReference type="CTD" id="149175"/>
<dbReference type="MGI" id="MGI:2684896">
    <property type="gene designation" value="Maneal"/>
</dbReference>
<dbReference type="VEuPathDB" id="HostDB:ENSMUSG00000042763"/>
<dbReference type="eggNOG" id="ENOG502QPJV">
    <property type="taxonomic scope" value="Eukaryota"/>
</dbReference>
<dbReference type="GeneTree" id="ENSGT00390000016054"/>
<dbReference type="HOGENOM" id="CLU_042710_1_1_1"/>
<dbReference type="InParanoid" id="Q6P1J0"/>
<dbReference type="OMA" id="VHWDHVM"/>
<dbReference type="OrthoDB" id="406152at2759"/>
<dbReference type="PhylomeDB" id="Q6P1J0"/>
<dbReference type="TreeFam" id="TF324051"/>
<dbReference type="BioGRID-ORCS" id="215090">
    <property type="hits" value="3 hits in 78 CRISPR screens"/>
</dbReference>
<dbReference type="ChiTaRS" id="Maneal">
    <property type="organism name" value="mouse"/>
</dbReference>
<dbReference type="PRO" id="PR:Q6P1J0"/>
<dbReference type="Proteomes" id="UP000000589">
    <property type="component" value="Chromosome 4"/>
</dbReference>
<dbReference type="RNAct" id="Q6P1J0">
    <property type="molecule type" value="protein"/>
</dbReference>
<dbReference type="Bgee" id="ENSMUSG00000042763">
    <property type="expression patterns" value="Expressed in retinal neural layer and 90 other cell types or tissues"/>
</dbReference>
<dbReference type="GO" id="GO:0000139">
    <property type="term" value="C:Golgi membrane"/>
    <property type="evidence" value="ECO:0007669"/>
    <property type="project" value="UniProtKB-SubCell"/>
</dbReference>
<dbReference type="GO" id="GO:0016798">
    <property type="term" value="F:hydrolase activity, acting on glycosyl bonds"/>
    <property type="evidence" value="ECO:0007669"/>
    <property type="project" value="InterPro"/>
</dbReference>
<dbReference type="CDD" id="cd11574">
    <property type="entry name" value="GH99"/>
    <property type="match status" value="1"/>
</dbReference>
<dbReference type="FunFam" id="3.20.20.80:FF:000019">
    <property type="entry name" value="glycoprotein endo-alpha-1,2-mannosidase"/>
    <property type="match status" value="1"/>
</dbReference>
<dbReference type="Gene3D" id="3.20.20.80">
    <property type="entry name" value="Glycosidases"/>
    <property type="match status" value="1"/>
</dbReference>
<dbReference type="InterPro" id="IPR026071">
    <property type="entry name" value="Glyco_Hydrolase_99"/>
</dbReference>
<dbReference type="PANTHER" id="PTHR13572">
    <property type="entry name" value="ENDO-ALPHA-1,2-MANNOSIDASE"/>
    <property type="match status" value="1"/>
</dbReference>
<dbReference type="PANTHER" id="PTHR13572:SF2">
    <property type="entry name" value="GLYCOPROTEIN ENDO-ALPHA-1,2-MANNOSIDASE-LIKE PROTEIN"/>
    <property type="match status" value="1"/>
</dbReference>
<dbReference type="Pfam" id="PF16317">
    <property type="entry name" value="Glyco_hydro_99"/>
    <property type="match status" value="1"/>
</dbReference>
<comment type="subcellular location">
    <subcellularLocation>
        <location evidence="1">Golgi apparatus membrane</location>
        <topology evidence="1">Single-pass type II membrane protein</topology>
    </subcellularLocation>
</comment>
<comment type="similarity">
    <text evidence="4">Belongs to the glycosyl hydrolase 99 family.</text>
</comment>
<accession>Q6P1J0</accession>
<accession>Q3UVP2</accession>
<proteinExistence type="evidence at transcript level"/>
<protein>
    <recommendedName>
        <fullName>Glycoprotein endo-alpha-1,2-mannosidase-like protein</fullName>
        <ecNumber>3.2.1.-</ecNumber>
    </recommendedName>
</protein>
<gene>
    <name type="primary">Maneal</name>
    <name type="synonym">Gm50</name>
</gene>
<reference key="1">
    <citation type="journal article" date="2009" name="PLoS Biol.">
        <title>Lineage-specific biology revealed by a finished genome assembly of the mouse.</title>
        <authorList>
            <person name="Church D.M."/>
            <person name="Goodstadt L."/>
            <person name="Hillier L.W."/>
            <person name="Zody M.C."/>
            <person name="Goldstein S."/>
            <person name="She X."/>
            <person name="Bult C.J."/>
            <person name="Agarwala R."/>
            <person name="Cherry J.L."/>
            <person name="DiCuccio M."/>
            <person name="Hlavina W."/>
            <person name="Kapustin Y."/>
            <person name="Meric P."/>
            <person name="Maglott D."/>
            <person name="Birtle Z."/>
            <person name="Marques A.C."/>
            <person name="Graves T."/>
            <person name="Zhou S."/>
            <person name="Teague B."/>
            <person name="Potamousis K."/>
            <person name="Churas C."/>
            <person name="Place M."/>
            <person name="Herschleb J."/>
            <person name="Runnheim R."/>
            <person name="Forrest D."/>
            <person name="Amos-Landgraf J."/>
            <person name="Schwartz D.C."/>
            <person name="Cheng Z."/>
            <person name="Lindblad-Toh K."/>
            <person name="Eichler E.E."/>
            <person name="Ponting C.P."/>
        </authorList>
    </citation>
    <scope>NUCLEOTIDE SEQUENCE [LARGE SCALE GENOMIC DNA]</scope>
    <source>
        <strain>C57BL/6J</strain>
    </source>
</reference>
<reference key="2">
    <citation type="journal article" date="2004" name="Genome Res.">
        <title>The status, quality, and expansion of the NIH full-length cDNA project: the Mammalian Gene Collection (MGC).</title>
        <authorList>
            <consortium name="The MGC Project Team"/>
        </authorList>
    </citation>
    <scope>NUCLEOTIDE SEQUENCE [LARGE SCALE MRNA]</scope>
    <source>
        <strain>C57BL/6J</strain>
        <tissue>Brain</tissue>
    </source>
</reference>
<reference key="3">
    <citation type="journal article" date="2005" name="Science">
        <title>The transcriptional landscape of the mammalian genome.</title>
        <authorList>
            <person name="Carninci P."/>
            <person name="Kasukawa T."/>
            <person name="Katayama S."/>
            <person name="Gough J."/>
            <person name="Frith M.C."/>
            <person name="Maeda N."/>
            <person name="Oyama R."/>
            <person name="Ravasi T."/>
            <person name="Lenhard B."/>
            <person name="Wells C."/>
            <person name="Kodzius R."/>
            <person name="Shimokawa K."/>
            <person name="Bajic V.B."/>
            <person name="Brenner S.E."/>
            <person name="Batalov S."/>
            <person name="Forrest A.R."/>
            <person name="Zavolan M."/>
            <person name="Davis M.J."/>
            <person name="Wilming L.G."/>
            <person name="Aidinis V."/>
            <person name="Allen J.E."/>
            <person name="Ambesi-Impiombato A."/>
            <person name="Apweiler R."/>
            <person name="Aturaliya R.N."/>
            <person name="Bailey T.L."/>
            <person name="Bansal M."/>
            <person name="Baxter L."/>
            <person name="Beisel K.W."/>
            <person name="Bersano T."/>
            <person name="Bono H."/>
            <person name="Chalk A.M."/>
            <person name="Chiu K.P."/>
            <person name="Choudhary V."/>
            <person name="Christoffels A."/>
            <person name="Clutterbuck D.R."/>
            <person name="Crowe M.L."/>
            <person name="Dalla E."/>
            <person name="Dalrymple B.P."/>
            <person name="de Bono B."/>
            <person name="Della Gatta G."/>
            <person name="di Bernardo D."/>
            <person name="Down T."/>
            <person name="Engstrom P."/>
            <person name="Fagiolini M."/>
            <person name="Faulkner G."/>
            <person name="Fletcher C.F."/>
            <person name="Fukushima T."/>
            <person name="Furuno M."/>
            <person name="Futaki S."/>
            <person name="Gariboldi M."/>
            <person name="Georgii-Hemming P."/>
            <person name="Gingeras T.R."/>
            <person name="Gojobori T."/>
            <person name="Green R.E."/>
            <person name="Gustincich S."/>
            <person name="Harbers M."/>
            <person name="Hayashi Y."/>
            <person name="Hensch T.K."/>
            <person name="Hirokawa N."/>
            <person name="Hill D."/>
            <person name="Huminiecki L."/>
            <person name="Iacono M."/>
            <person name="Ikeo K."/>
            <person name="Iwama A."/>
            <person name="Ishikawa T."/>
            <person name="Jakt M."/>
            <person name="Kanapin A."/>
            <person name="Katoh M."/>
            <person name="Kawasawa Y."/>
            <person name="Kelso J."/>
            <person name="Kitamura H."/>
            <person name="Kitano H."/>
            <person name="Kollias G."/>
            <person name="Krishnan S.P."/>
            <person name="Kruger A."/>
            <person name="Kummerfeld S.K."/>
            <person name="Kurochkin I.V."/>
            <person name="Lareau L.F."/>
            <person name="Lazarevic D."/>
            <person name="Lipovich L."/>
            <person name="Liu J."/>
            <person name="Liuni S."/>
            <person name="McWilliam S."/>
            <person name="Madan Babu M."/>
            <person name="Madera M."/>
            <person name="Marchionni L."/>
            <person name="Matsuda H."/>
            <person name="Matsuzawa S."/>
            <person name="Miki H."/>
            <person name="Mignone F."/>
            <person name="Miyake S."/>
            <person name="Morris K."/>
            <person name="Mottagui-Tabar S."/>
            <person name="Mulder N."/>
            <person name="Nakano N."/>
            <person name="Nakauchi H."/>
            <person name="Ng P."/>
            <person name="Nilsson R."/>
            <person name="Nishiguchi S."/>
            <person name="Nishikawa S."/>
            <person name="Nori F."/>
            <person name="Ohara O."/>
            <person name="Okazaki Y."/>
            <person name="Orlando V."/>
            <person name="Pang K.C."/>
            <person name="Pavan W.J."/>
            <person name="Pavesi G."/>
            <person name="Pesole G."/>
            <person name="Petrovsky N."/>
            <person name="Piazza S."/>
            <person name="Reed J."/>
            <person name="Reid J.F."/>
            <person name="Ring B.Z."/>
            <person name="Ringwald M."/>
            <person name="Rost B."/>
            <person name="Ruan Y."/>
            <person name="Salzberg S.L."/>
            <person name="Sandelin A."/>
            <person name="Schneider C."/>
            <person name="Schoenbach C."/>
            <person name="Sekiguchi K."/>
            <person name="Semple C.A."/>
            <person name="Seno S."/>
            <person name="Sessa L."/>
            <person name="Sheng Y."/>
            <person name="Shibata Y."/>
            <person name="Shimada H."/>
            <person name="Shimada K."/>
            <person name="Silva D."/>
            <person name="Sinclair B."/>
            <person name="Sperling S."/>
            <person name="Stupka E."/>
            <person name="Sugiura K."/>
            <person name="Sultana R."/>
            <person name="Takenaka Y."/>
            <person name="Taki K."/>
            <person name="Tammoja K."/>
            <person name="Tan S.L."/>
            <person name="Tang S."/>
            <person name="Taylor M.S."/>
            <person name="Tegner J."/>
            <person name="Teichmann S.A."/>
            <person name="Ueda H.R."/>
            <person name="van Nimwegen E."/>
            <person name="Verardo R."/>
            <person name="Wei C.L."/>
            <person name="Yagi K."/>
            <person name="Yamanishi H."/>
            <person name="Zabarovsky E."/>
            <person name="Zhu S."/>
            <person name="Zimmer A."/>
            <person name="Hide W."/>
            <person name="Bult C."/>
            <person name="Grimmond S.M."/>
            <person name="Teasdale R.D."/>
            <person name="Liu E.T."/>
            <person name="Brusic V."/>
            <person name="Quackenbush J."/>
            <person name="Wahlestedt C."/>
            <person name="Mattick J.S."/>
            <person name="Hume D.A."/>
            <person name="Kai C."/>
            <person name="Sasaki D."/>
            <person name="Tomaru Y."/>
            <person name="Fukuda S."/>
            <person name="Kanamori-Katayama M."/>
            <person name="Suzuki M."/>
            <person name="Aoki J."/>
            <person name="Arakawa T."/>
            <person name="Iida J."/>
            <person name="Imamura K."/>
            <person name="Itoh M."/>
            <person name="Kato T."/>
            <person name="Kawaji H."/>
            <person name="Kawagashira N."/>
            <person name="Kawashima T."/>
            <person name="Kojima M."/>
            <person name="Kondo S."/>
            <person name="Konno H."/>
            <person name="Nakano K."/>
            <person name="Ninomiya N."/>
            <person name="Nishio T."/>
            <person name="Okada M."/>
            <person name="Plessy C."/>
            <person name="Shibata K."/>
            <person name="Shiraki T."/>
            <person name="Suzuki S."/>
            <person name="Tagami M."/>
            <person name="Waki K."/>
            <person name="Watahiki A."/>
            <person name="Okamura-Oho Y."/>
            <person name="Suzuki H."/>
            <person name="Kawai J."/>
            <person name="Hayashizaki Y."/>
        </authorList>
    </citation>
    <scope>NUCLEOTIDE SEQUENCE [LARGE SCALE MRNA] OF 323-452</scope>
    <source>
        <strain>C57BL/6J</strain>
    </source>
</reference>